<dbReference type="EC" id="4.1.1.31" evidence="1"/>
<dbReference type="EMBL" id="CP000408">
    <property type="protein sequence ID" value="ABP91679.1"/>
    <property type="molecule type" value="Genomic_DNA"/>
</dbReference>
<dbReference type="SMR" id="A4VZZ0"/>
<dbReference type="KEGG" id="ssv:SSU98_0521"/>
<dbReference type="HOGENOM" id="CLU_006557_2_0_9"/>
<dbReference type="GO" id="GO:0005829">
    <property type="term" value="C:cytosol"/>
    <property type="evidence" value="ECO:0007669"/>
    <property type="project" value="TreeGrafter"/>
</dbReference>
<dbReference type="GO" id="GO:0000287">
    <property type="term" value="F:magnesium ion binding"/>
    <property type="evidence" value="ECO:0007669"/>
    <property type="project" value="UniProtKB-UniRule"/>
</dbReference>
<dbReference type="GO" id="GO:0008964">
    <property type="term" value="F:phosphoenolpyruvate carboxylase activity"/>
    <property type="evidence" value="ECO:0007669"/>
    <property type="project" value="UniProtKB-UniRule"/>
</dbReference>
<dbReference type="GO" id="GO:0015977">
    <property type="term" value="P:carbon fixation"/>
    <property type="evidence" value="ECO:0007669"/>
    <property type="project" value="UniProtKB-UniRule"/>
</dbReference>
<dbReference type="GO" id="GO:0006107">
    <property type="term" value="P:oxaloacetate metabolic process"/>
    <property type="evidence" value="ECO:0007669"/>
    <property type="project" value="UniProtKB-UniRule"/>
</dbReference>
<dbReference type="GO" id="GO:0006099">
    <property type="term" value="P:tricarboxylic acid cycle"/>
    <property type="evidence" value="ECO:0007669"/>
    <property type="project" value="InterPro"/>
</dbReference>
<dbReference type="Gene3D" id="1.20.1440.90">
    <property type="entry name" value="Phosphoenolpyruvate/pyruvate domain"/>
    <property type="match status" value="1"/>
</dbReference>
<dbReference type="HAMAP" id="MF_00595">
    <property type="entry name" value="PEPcase_type1"/>
    <property type="match status" value="1"/>
</dbReference>
<dbReference type="InterPro" id="IPR021135">
    <property type="entry name" value="PEP_COase"/>
</dbReference>
<dbReference type="InterPro" id="IPR022805">
    <property type="entry name" value="PEP_COase_bac/pln-type"/>
</dbReference>
<dbReference type="InterPro" id="IPR018129">
    <property type="entry name" value="PEP_COase_Lys_AS"/>
</dbReference>
<dbReference type="InterPro" id="IPR033129">
    <property type="entry name" value="PEPCASE_His_AS"/>
</dbReference>
<dbReference type="InterPro" id="IPR015813">
    <property type="entry name" value="Pyrv/PenolPyrv_kinase-like_dom"/>
</dbReference>
<dbReference type="NCBIfam" id="NF000584">
    <property type="entry name" value="PRK00009.1"/>
    <property type="match status" value="1"/>
</dbReference>
<dbReference type="PANTHER" id="PTHR30523">
    <property type="entry name" value="PHOSPHOENOLPYRUVATE CARBOXYLASE"/>
    <property type="match status" value="1"/>
</dbReference>
<dbReference type="PANTHER" id="PTHR30523:SF6">
    <property type="entry name" value="PHOSPHOENOLPYRUVATE CARBOXYLASE"/>
    <property type="match status" value="1"/>
</dbReference>
<dbReference type="Pfam" id="PF00311">
    <property type="entry name" value="PEPcase"/>
    <property type="match status" value="1"/>
</dbReference>
<dbReference type="PRINTS" id="PR00150">
    <property type="entry name" value="PEPCARBXLASE"/>
</dbReference>
<dbReference type="SUPFAM" id="SSF51621">
    <property type="entry name" value="Phosphoenolpyruvate/pyruvate domain"/>
    <property type="match status" value="1"/>
</dbReference>
<dbReference type="PROSITE" id="PS00781">
    <property type="entry name" value="PEPCASE_1"/>
    <property type="match status" value="1"/>
</dbReference>
<dbReference type="PROSITE" id="PS00393">
    <property type="entry name" value="PEPCASE_2"/>
    <property type="match status" value="1"/>
</dbReference>
<comment type="function">
    <text evidence="1">Forms oxaloacetate, a four-carbon dicarboxylic acid source for the tricarboxylic acid cycle.</text>
</comment>
<comment type="catalytic activity">
    <reaction evidence="1">
        <text>oxaloacetate + phosphate = phosphoenolpyruvate + hydrogencarbonate</text>
        <dbReference type="Rhea" id="RHEA:28370"/>
        <dbReference type="ChEBI" id="CHEBI:16452"/>
        <dbReference type="ChEBI" id="CHEBI:17544"/>
        <dbReference type="ChEBI" id="CHEBI:43474"/>
        <dbReference type="ChEBI" id="CHEBI:58702"/>
        <dbReference type="EC" id="4.1.1.31"/>
    </reaction>
</comment>
<comment type="cofactor">
    <cofactor evidence="1">
        <name>Mg(2+)</name>
        <dbReference type="ChEBI" id="CHEBI:18420"/>
    </cofactor>
</comment>
<comment type="similarity">
    <text evidence="1">Belongs to the PEPCase type 1 family.</text>
</comment>
<evidence type="ECO:0000255" key="1">
    <source>
        <dbReference type="HAMAP-Rule" id="MF_00595"/>
    </source>
</evidence>
<protein>
    <recommendedName>
        <fullName evidence="1">Phosphoenolpyruvate carboxylase</fullName>
        <shortName evidence="1">PEPC</shortName>
        <shortName evidence="1">PEPCase</shortName>
        <ecNumber evidence="1">4.1.1.31</ecNumber>
    </recommendedName>
</protein>
<gene>
    <name evidence="1" type="primary">ppc</name>
    <name type="ordered locus">SSU98_0521</name>
</gene>
<keyword id="KW-0120">Carbon dioxide fixation</keyword>
<keyword id="KW-0456">Lyase</keyword>
<keyword id="KW-0460">Magnesium</keyword>
<accession>A4VZZ0</accession>
<reference key="1">
    <citation type="journal article" date="2007" name="PLoS ONE">
        <title>A glimpse of streptococcal toxic shock syndrome from comparative genomics of S. suis 2 Chinese isolates.</title>
        <authorList>
            <person name="Chen C."/>
            <person name="Tang J."/>
            <person name="Dong W."/>
            <person name="Wang C."/>
            <person name="Feng Y."/>
            <person name="Wang J."/>
            <person name="Zheng F."/>
            <person name="Pan X."/>
            <person name="Liu D."/>
            <person name="Li M."/>
            <person name="Song Y."/>
            <person name="Zhu X."/>
            <person name="Sun H."/>
            <person name="Feng T."/>
            <person name="Guo Z."/>
            <person name="Ju A."/>
            <person name="Ge J."/>
            <person name="Dong Y."/>
            <person name="Sun W."/>
            <person name="Jiang Y."/>
            <person name="Wang J."/>
            <person name="Yan J."/>
            <person name="Yang H."/>
            <person name="Wang X."/>
            <person name="Gao G.F."/>
            <person name="Yang R."/>
            <person name="Wang J."/>
            <person name="Yu J."/>
        </authorList>
    </citation>
    <scope>NUCLEOTIDE SEQUENCE [LARGE SCALE GENOMIC DNA]</scope>
    <source>
        <strain>98HAH33</strain>
    </source>
</reference>
<organism>
    <name type="scientific">Streptococcus suis (strain 98HAH33)</name>
    <dbReference type="NCBI Taxonomy" id="391296"/>
    <lineage>
        <taxon>Bacteria</taxon>
        <taxon>Bacillati</taxon>
        <taxon>Bacillota</taxon>
        <taxon>Bacilli</taxon>
        <taxon>Lactobacillales</taxon>
        <taxon>Streptococcaceae</taxon>
        <taxon>Streptococcus</taxon>
    </lineage>
</organism>
<name>CAPP_STRS2</name>
<feature type="chain" id="PRO_1000025595" description="Phosphoenolpyruvate carboxylase">
    <location>
        <begin position="1"/>
        <end position="898"/>
    </location>
</feature>
<feature type="active site" evidence="1">
    <location>
        <position position="138"/>
    </location>
</feature>
<feature type="active site" evidence="1">
    <location>
        <position position="561"/>
    </location>
</feature>
<sequence>MAIQKLENYNNKEAIREEVTILTSILEEVAAQMMPAETFAKIVELSQLSRQDDYQALIAIISQLNNDELAVISRYFAVLPLLINISEDVDLAYEINHQNNIDQDYLGKISTTIDMVSKQENAAEILEKLNVVPVLTAHPTQVQRQSMLDLTKHIHELLRRYRDVKLGLLNKNKWEDELRCYIEIIMQTDMIREKKLKVTNEITNVMEYYNSSFIKAVTKLQREYKRLAAEKGIVLNNPRPITMGMWIGGDRDGNPFVTAETLKLSALTQCEVIMNYYDEQLYKLYRNFSLSTSIVNVSTAVKMLADLSEDSSVYRENEPYRRAFHYIQMKLANTRDYLVHNKPSDVRYSNVAEFKADLLAIKQSLVENKSMALLKGDFTELLEAVEAFGFYLASIDMRQDSSIHEASVAELLASARIVEDYSSLSEEAKCHVLLKQLETDPRILSATHMPKSEQLEKELAIFAAARELKDKLGEEIIKQHIISHSESVSDLLELAVLLKEVGLVDVDKARVQIVPLFETIEDLDNAPDTMRQYLQLDLAKRWIAGNKYYQEIMLGYSDSNKDGGYLSSGWTLYKAQNELTQIGQDYGVNITFFHGRGGTVGRGGGPSYDAITSQPFGSIKDRLRLTEQGEVIGNKYGNKDAAYYNLEMLVSATLDRMVTQMITDPNEIDGYRETMDEIVSDSYRIYRDLVFNNPHFYDYFFAASPIREVSSLNIGSRPAARKTITEIGGLRAIPWVFSWSQNRVMLPGWYGVGSSFKRFIDKHPDNLSKLQKMYESWPFFRSLLSNVDMVLSKSNMNIAFEYAKMCESEEVRNIFHVILDEWQLTKEIILSIEQNDELLAELPFLKASLDYRMPYFNVLNYIQIELIHRLRRGELSKEQENLIHITINGVATGLRNSG</sequence>
<proteinExistence type="inferred from homology"/>